<accession>A9M7V7</accession>
<sequence>MIIITPITNDPTTALLRLMAWLSPVFPVGSFSYSHGLERAVHDGLVVDAAGLQDWLQWLVRRGSGWNDAVLCAESWRCAMKGEDLHEIAELAEALAGSRERHMETMLQGGAFLAAARSWPCEIFDRLPPDCAYPVAVGAVAGGHGVPLAQALAAFLQAFCINLLQASIRLSVTGQSGVTAIMAALEPVLGETAARAALSSMEDLGSATFIADIMAMKHETQHSRLFRS</sequence>
<comment type="function">
    <text evidence="1">Required for maturation of urease via the functional incorporation of the urease nickel metallocenter.</text>
</comment>
<comment type="subunit">
    <text evidence="1">UreD, UreF and UreG form a complex that acts as a GTP-hydrolysis-dependent molecular chaperone, activating the urease apoprotein by helping to assemble the nickel containing metallocenter of UreC. The UreE protein probably delivers the nickel.</text>
</comment>
<comment type="subcellular location">
    <subcellularLocation>
        <location evidence="1">Cytoplasm</location>
    </subcellularLocation>
</comment>
<comment type="similarity">
    <text evidence="1">Belongs to the UreF family.</text>
</comment>
<dbReference type="EMBL" id="CP000872">
    <property type="protein sequence ID" value="ABX61367.1"/>
    <property type="molecule type" value="Genomic_DNA"/>
</dbReference>
<dbReference type="RefSeq" id="WP_004690532.1">
    <property type="nucleotide sequence ID" value="NC_010103.1"/>
</dbReference>
<dbReference type="SMR" id="A9M7V7"/>
<dbReference type="GeneID" id="55590051"/>
<dbReference type="KEGG" id="bcs:BCAN_A0275"/>
<dbReference type="HOGENOM" id="CLU_049215_2_0_5"/>
<dbReference type="PhylomeDB" id="A9M7V7"/>
<dbReference type="Proteomes" id="UP000001385">
    <property type="component" value="Chromosome I"/>
</dbReference>
<dbReference type="GO" id="GO:0005737">
    <property type="term" value="C:cytoplasm"/>
    <property type="evidence" value="ECO:0007669"/>
    <property type="project" value="UniProtKB-SubCell"/>
</dbReference>
<dbReference type="GO" id="GO:0016151">
    <property type="term" value="F:nickel cation binding"/>
    <property type="evidence" value="ECO:0007669"/>
    <property type="project" value="UniProtKB-UniRule"/>
</dbReference>
<dbReference type="Gene3D" id="1.10.4190.10">
    <property type="entry name" value="Urease accessory protein UreF"/>
    <property type="match status" value="1"/>
</dbReference>
<dbReference type="HAMAP" id="MF_01385">
    <property type="entry name" value="UreF"/>
    <property type="match status" value="1"/>
</dbReference>
<dbReference type="InterPro" id="IPR002639">
    <property type="entry name" value="UreF"/>
</dbReference>
<dbReference type="InterPro" id="IPR038277">
    <property type="entry name" value="UreF_sf"/>
</dbReference>
<dbReference type="PANTHER" id="PTHR33620">
    <property type="entry name" value="UREASE ACCESSORY PROTEIN F"/>
    <property type="match status" value="1"/>
</dbReference>
<dbReference type="PANTHER" id="PTHR33620:SF1">
    <property type="entry name" value="UREASE ACCESSORY PROTEIN F"/>
    <property type="match status" value="1"/>
</dbReference>
<dbReference type="Pfam" id="PF01730">
    <property type="entry name" value="UreF"/>
    <property type="match status" value="1"/>
</dbReference>
<dbReference type="PIRSF" id="PIRSF009467">
    <property type="entry name" value="Ureas_acces_UreF"/>
    <property type="match status" value="1"/>
</dbReference>
<feature type="chain" id="PRO_0000344087" description="Urease accessory protein UreF 1">
    <location>
        <begin position="1"/>
        <end position="228"/>
    </location>
</feature>
<organism>
    <name type="scientific">Brucella canis (strain ATCC 23365 / NCTC 10854 / RM-666)</name>
    <dbReference type="NCBI Taxonomy" id="483179"/>
    <lineage>
        <taxon>Bacteria</taxon>
        <taxon>Pseudomonadati</taxon>
        <taxon>Pseudomonadota</taxon>
        <taxon>Alphaproteobacteria</taxon>
        <taxon>Hyphomicrobiales</taxon>
        <taxon>Brucellaceae</taxon>
        <taxon>Brucella/Ochrobactrum group</taxon>
        <taxon>Brucella</taxon>
    </lineage>
</organism>
<proteinExistence type="inferred from homology"/>
<name>UREF1_BRUC2</name>
<gene>
    <name evidence="1" type="primary">ureF1</name>
    <name type="ordered locus">BCAN_A0275</name>
</gene>
<reference key="1">
    <citation type="submission" date="2007-10" db="EMBL/GenBank/DDBJ databases">
        <title>Brucella canis ATCC 23365 whole genome shotgun sequencing project.</title>
        <authorList>
            <person name="Setubal J.C."/>
            <person name="Bowns C."/>
            <person name="Boyle S."/>
            <person name="Crasta O.R."/>
            <person name="Czar M.J."/>
            <person name="Dharmanolla C."/>
            <person name="Gillespie J.J."/>
            <person name="Kenyon R.W."/>
            <person name="Lu J."/>
            <person name="Mane S."/>
            <person name="Mohapatra S."/>
            <person name="Nagrani S."/>
            <person name="Purkayastha A."/>
            <person name="Rajasimha H.K."/>
            <person name="Shallom J.M."/>
            <person name="Shallom S."/>
            <person name="Shukla M."/>
            <person name="Snyder E.E."/>
            <person name="Sobral B.W."/>
            <person name="Wattam A.R."/>
            <person name="Will R."/>
            <person name="Williams K."/>
            <person name="Yoo H."/>
            <person name="Bruce D."/>
            <person name="Detter C."/>
            <person name="Munk C."/>
            <person name="Brettin T.S."/>
        </authorList>
    </citation>
    <scope>NUCLEOTIDE SEQUENCE [LARGE SCALE GENOMIC DNA]</scope>
    <source>
        <strain>ATCC 23365 / NCTC 10854 / RM-666</strain>
    </source>
</reference>
<protein>
    <recommendedName>
        <fullName evidence="1">Urease accessory protein UreF 1</fullName>
    </recommendedName>
</protein>
<evidence type="ECO:0000255" key="1">
    <source>
        <dbReference type="HAMAP-Rule" id="MF_01385"/>
    </source>
</evidence>
<keyword id="KW-0143">Chaperone</keyword>
<keyword id="KW-0963">Cytoplasm</keyword>
<keyword id="KW-0996">Nickel insertion</keyword>
<keyword id="KW-1185">Reference proteome</keyword>